<protein>
    <recommendedName>
        <fullName evidence="1">Serine hydroxymethyltransferase</fullName>
        <shortName evidence="1">SHMT</shortName>
        <shortName evidence="1">Serine methylase</shortName>
        <ecNumber evidence="1">2.1.2.1</ecNumber>
    </recommendedName>
</protein>
<comment type="function">
    <text evidence="1">Catalyzes the reversible interconversion of serine and glycine with tetrahydrofolate (THF) serving as the one-carbon carrier. This reaction serves as the major source of one-carbon groups required for the biosynthesis of purines, thymidylate, methionine, and other important biomolecules. Also exhibits THF-independent aldolase activity toward beta-hydroxyamino acids, producing glycine and aldehydes, via a retro-aldol mechanism.</text>
</comment>
<comment type="catalytic activity">
    <reaction evidence="1">
        <text>(6R)-5,10-methylene-5,6,7,8-tetrahydrofolate + glycine + H2O = (6S)-5,6,7,8-tetrahydrofolate + L-serine</text>
        <dbReference type="Rhea" id="RHEA:15481"/>
        <dbReference type="ChEBI" id="CHEBI:15377"/>
        <dbReference type="ChEBI" id="CHEBI:15636"/>
        <dbReference type="ChEBI" id="CHEBI:33384"/>
        <dbReference type="ChEBI" id="CHEBI:57305"/>
        <dbReference type="ChEBI" id="CHEBI:57453"/>
        <dbReference type="EC" id="2.1.2.1"/>
    </reaction>
</comment>
<comment type="cofactor">
    <cofactor evidence="1">
        <name>pyridoxal 5'-phosphate</name>
        <dbReference type="ChEBI" id="CHEBI:597326"/>
    </cofactor>
</comment>
<comment type="pathway">
    <text evidence="1">One-carbon metabolism; tetrahydrofolate interconversion.</text>
</comment>
<comment type="pathway">
    <text evidence="1">Amino-acid biosynthesis; glycine biosynthesis; glycine from L-serine: step 1/1.</text>
</comment>
<comment type="subunit">
    <text evidence="1">Homodimer.</text>
</comment>
<comment type="subcellular location">
    <subcellularLocation>
        <location evidence="1">Cytoplasm</location>
    </subcellularLocation>
</comment>
<comment type="similarity">
    <text evidence="1">Belongs to the SHMT family.</text>
</comment>
<evidence type="ECO:0000255" key="1">
    <source>
        <dbReference type="HAMAP-Rule" id="MF_00051"/>
    </source>
</evidence>
<reference key="1">
    <citation type="submission" date="2004-06" db="EMBL/GenBank/DDBJ databases">
        <authorList>
            <person name="Birren B.W."/>
            <person name="Stange-Thomann N."/>
            <person name="Hafez N."/>
            <person name="DeCaprio D."/>
            <person name="Fisher S."/>
            <person name="Butler J."/>
            <person name="Elkins T."/>
            <person name="Kodira C.D."/>
            <person name="Major J."/>
            <person name="Wang S."/>
            <person name="Nicol R."/>
            <person name="Nusbaum C."/>
        </authorList>
    </citation>
    <scope>NUCLEOTIDE SEQUENCE [LARGE SCALE GENOMIC DNA]</scope>
    <source>
        <strain>ATCC 33453 / NBRC 100688 / NCTC 11704 / L1</strain>
    </source>
</reference>
<sequence>MSTINKNILESLKGELKRQQDHIELIASENYVSDAVLQLSGSILTNKYAEGYPDKRYYGGCEFVDQIEKQGIELAKKIFNAGHANLQPHSGSQANEAVYRALLQNGDKVVSMSLDAGGHLTHGYPINFSGNNYDFKFYGVNRETEEIDFDEVRKVVLEHQPKLIVAGASAYSRIIDFKKFREIADEVGALLMVDMAHIAGLVAGGAHPNPMEYADVVTTTTHKTLRGARGGMILSKAEIGKKIDSSVFPGTQGGPLENQIAGKVQALYEADTPEFKEYVHQVVANSKAFAKALADNGMRLIANGTDNHLINLDVKNTLNVTGKDAEKILESIGIVSNKNMIPFDTEKPFVTSGIRVGTAAMTTRGFKEEQFVEVAKIIASALKDQSETNLNTLSKEVAKLCKQFPIYEHLSY</sequence>
<accession>Q6F211</accession>
<keyword id="KW-0028">Amino-acid biosynthesis</keyword>
<keyword id="KW-0963">Cytoplasm</keyword>
<keyword id="KW-0554">One-carbon metabolism</keyword>
<keyword id="KW-0663">Pyridoxal phosphate</keyword>
<keyword id="KW-1185">Reference proteome</keyword>
<keyword id="KW-0808">Transferase</keyword>
<proteinExistence type="inferred from homology"/>
<feature type="chain" id="PRO_0000113603" description="Serine hydroxymethyltransferase">
    <location>
        <begin position="1"/>
        <end position="412"/>
    </location>
</feature>
<feature type="binding site" evidence="1">
    <location>
        <position position="114"/>
    </location>
    <ligand>
        <name>(6S)-5,6,7,8-tetrahydrofolate</name>
        <dbReference type="ChEBI" id="CHEBI:57453"/>
    </ligand>
</feature>
<feature type="binding site" evidence="1">
    <location>
        <begin position="118"/>
        <end position="120"/>
    </location>
    <ligand>
        <name>(6S)-5,6,7,8-tetrahydrofolate</name>
        <dbReference type="ChEBI" id="CHEBI:57453"/>
    </ligand>
</feature>
<feature type="site" description="Plays an important role in substrate specificity" evidence="1">
    <location>
        <position position="222"/>
    </location>
</feature>
<feature type="modified residue" description="N6-(pyridoxal phosphate)lysine" evidence="1">
    <location>
        <position position="223"/>
    </location>
</feature>
<dbReference type="EC" id="2.1.2.1" evidence="1"/>
<dbReference type="EMBL" id="AE017263">
    <property type="protein sequence ID" value="AAT75462.1"/>
    <property type="molecule type" value="Genomic_DNA"/>
</dbReference>
<dbReference type="RefSeq" id="WP_011183003.1">
    <property type="nucleotide sequence ID" value="NC_006055.1"/>
</dbReference>
<dbReference type="RefSeq" id="YP_053346.1">
    <property type="nucleotide sequence ID" value="NC_006055.1"/>
</dbReference>
<dbReference type="SMR" id="Q6F211"/>
<dbReference type="STRING" id="265311.Mfl106"/>
<dbReference type="PaxDb" id="265311-Mfl106"/>
<dbReference type="EnsemblBacteria" id="AAT75462">
    <property type="protein sequence ID" value="AAT75462"/>
    <property type="gene ID" value="Mfl106"/>
</dbReference>
<dbReference type="GeneID" id="2898166"/>
<dbReference type="KEGG" id="mfl:Mfl106"/>
<dbReference type="PATRIC" id="fig|265311.5.peg.107"/>
<dbReference type="eggNOG" id="COG0112">
    <property type="taxonomic scope" value="Bacteria"/>
</dbReference>
<dbReference type="HOGENOM" id="CLU_022477_2_1_14"/>
<dbReference type="OrthoDB" id="9803846at2"/>
<dbReference type="UniPathway" id="UPA00193"/>
<dbReference type="UniPathway" id="UPA00288">
    <property type="reaction ID" value="UER01023"/>
</dbReference>
<dbReference type="Proteomes" id="UP000006647">
    <property type="component" value="Chromosome"/>
</dbReference>
<dbReference type="GO" id="GO:0005829">
    <property type="term" value="C:cytosol"/>
    <property type="evidence" value="ECO:0007669"/>
    <property type="project" value="TreeGrafter"/>
</dbReference>
<dbReference type="GO" id="GO:0004372">
    <property type="term" value="F:glycine hydroxymethyltransferase activity"/>
    <property type="evidence" value="ECO:0007669"/>
    <property type="project" value="UniProtKB-UniRule"/>
</dbReference>
<dbReference type="GO" id="GO:0030170">
    <property type="term" value="F:pyridoxal phosphate binding"/>
    <property type="evidence" value="ECO:0007669"/>
    <property type="project" value="UniProtKB-UniRule"/>
</dbReference>
<dbReference type="GO" id="GO:0019264">
    <property type="term" value="P:glycine biosynthetic process from serine"/>
    <property type="evidence" value="ECO:0007669"/>
    <property type="project" value="UniProtKB-UniRule"/>
</dbReference>
<dbReference type="GO" id="GO:0035999">
    <property type="term" value="P:tetrahydrofolate interconversion"/>
    <property type="evidence" value="ECO:0007669"/>
    <property type="project" value="UniProtKB-UniRule"/>
</dbReference>
<dbReference type="CDD" id="cd00378">
    <property type="entry name" value="SHMT"/>
    <property type="match status" value="1"/>
</dbReference>
<dbReference type="FunFam" id="3.40.640.10:FF:000001">
    <property type="entry name" value="Serine hydroxymethyltransferase"/>
    <property type="match status" value="1"/>
</dbReference>
<dbReference type="Gene3D" id="3.90.1150.10">
    <property type="entry name" value="Aspartate Aminotransferase, domain 1"/>
    <property type="match status" value="1"/>
</dbReference>
<dbReference type="Gene3D" id="3.40.640.10">
    <property type="entry name" value="Type I PLP-dependent aspartate aminotransferase-like (Major domain)"/>
    <property type="match status" value="1"/>
</dbReference>
<dbReference type="HAMAP" id="MF_00051">
    <property type="entry name" value="SHMT"/>
    <property type="match status" value="1"/>
</dbReference>
<dbReference type="InterPro" id="IPR015424">
    <property type="entry name" value="PyrdxlP-dep_Trfase"/>
</dbReference>
<dbReference type="InterPro" id="IPR015421">
    <property type="entry name" value="PyrdxlP-dep_Trfase_major"/>
</dbReference>
<dbReference type="InterPro" id="IPR015422">
    <property type="entry name" value="PyrdxlP-dep_Trfase_small"/>
</dbReference>
<dbReference type="InterPro" id="IPR001085">
    <property type="entry name" value="Ser_HO-MeTrfase"/>
</dbReference>
<dbReference type="InterPro" id="IPR049943">
    <property type="entry name" value="Ser_HO-MeTrfase-like"/>
</dbReference>
<dbReference type="InterPro" id="IPR019798">
    <property type="entry name" value="Ser_HO-MeTrfase_PLP_BS"/>
</dbReference>
<dbReference type="InterPro" id="IPR039429">
    <property type="entry name" value="SHMT-like_dom"/>
</dbReference>
<dbReference type="NCBIfam" id="NF000586">
    <property type="entry name" value="PRK00011.1"/>
    <property type="match status" value="1"/>
</dbReference>
<dbReference type="PANTHER" id="PTHR11680">
    <property type="entry name" value="SERINE HYDROXYMETHYLTRANSFERASE"/>
    <property type="match status" value="1"/>
</dbReference>
<dbReference type="PANTHER" id="PTHR11680:SF35">
    <property type="entry name" value="SERINE HYDROXYMETHYLTRANSFERASE 1"/>
    <property type="match status" value="1"/>
</dbReference>
<dbReference type="Pfam" id="PF00464">
    <property type="entry name" value="SHMT"/>
    <property type="match status" value="1"/>
</dbReference>
<dbReference type="PIRSF" id="PIRSF000412">
    <property type="entry name" value="SHMT"/>
    <property type="match status" value="1"/>
</dbReference>
<dbReference type="SUPFAM" id="SSF53383">
    <property type="entry name" value="PLP-dependent transferases"/>
    <property type="match status" value="1"/>
</dbReference>
<dbReference type="PROSITE" id="PS00096">
    <property type="entry name" value="SHMT"/>
    <property type="match status" value="1"/>
</dbReference>
<organism>
    <name type="scientific">Mesoplasma florum (strain ATCC 33453 / NBRC 100688 / NCTC 11704 / L1)</name>
    <name type="common">Acholeplasma florum</name>
    <dbReference type="NCBI Taxonomy" id="265311"/>
    <lineage>
        <taxon>Bacteria</taxon>
        <taxon>Bacillati</taxon>
        <taxon>Mycoplasmatota</taxon>
        <taxon>Mollicutes</taxon>
        <taxon>Entomoplasmatales</taxon>
        <taxon>Entomoplasmataceae</taxon>
        <taxon>Mesoplasma</taxon>
    </lineage>
</organism>
<name>GLYA_MESFL</name>
<gene>
    <name evidence="1" type="primary">glyA</name>
    <name type="ordered locus">Mfl106</name>
</gene>